<evidence type="ECO:0000255" key="1">
    <source>
        <dbReference type="HAMAP-Rule" id="MF_01309"/>
    </source>
</evidence>
<evidence type="ECO:0000256" key="2">
    <source>
        <dbReference type="SAM" id="MobiDB-lite"/>
    </source>
</evidence>
<evidence type="ECO:0000305" key="3"/>
<gene>
    <name evidence="1" type="primary">rpsC</name>
    <name type="ordered locus">RHA1_ro06139</name>
</gene>
<organism>
    <name type="scientific">Rhodococcus jostii (strain RHA1)</name>
    <dbReference type="NCBI Taxonomy" id="101510"/>
    <lineage>
        <taxon>Bacteria</taxon>
        <taxon>Bacillati</taxon>
        <taxon>Actinomycetota</taxon>
        <taxon>Actinomycetes</taxon>
        <taxon>Mycobacteriales</taxon>
        <taxon>Nocardiaceae</taxon>
        <taxon>Rhodococcus</taxon>
    </lineage>
</organism>
<keyword id="KW-0687">Ribonucleoprotein</keyword>
<keyword id="KW-0689">Ribosomal protein</keyword>
<keyword id="KW-0694">RNA-binding</keyword>
<keyword id="KW-0699">rRNA-binding</keyword>
<sequence>MGQKINPHGFRLGITTDWKSRWYADKQYAEYVKEDVAIRKLLATGMERAGIAKVEIERTRDRVRVDIHTARPGIVIGRRGAEADRIRSELEKLTGKQVQLNILEVKNAEAEAQLVAQGVAEQLSNRVAFRRAMRKAIQSAMRQPNVKGIRVQCSGRLGGAEMSRSEFYREGRVPLHTLRADIDYGLYEAKTTFGRIGVKVWIYKGDIVGGKRELAANVAAPAGDRPRRERPSRPRRSGATGTTATSTEAGRAATATADAPATTEQKEG</sequence>
<feature type="chain" id="PRO_0000293866" description="Small ribosomal subunit protein uS3">
    <location>
        <begin position="1"/>
        <end position="268"/>
    </location>
</feature>
<feature type="domain" description="KH type-2" evidence="1">
    <location>
        <begin position="38"/>
        <end position="106"/>
    </location>
</feature>
<feature type="region of interest" description="Disordered" evidence="2">
    <location>
        <begin position="218"/>
        <end position="268"/>
    </location>
</feature>
<feature type="compositionally biased region" description="Low complexity" evidence="2">
    <location>
        <begin position="237"/>
        <end position="268"/>
    </location>
</feature>
<dbReference type="EMBL" id="CP000431">
    <property type="protein sequence ID" value="ABG97916.1"/>
    <property type="molecule type" value="Genomic_DNA"/>
</dbReference>
<dbReference type="RefSeq" id="WP_005239635.1">
    <property type="nucleotide sequence ID" value="NC_008268.1"/>
</dbReference>
<dbReference type="SMR" id="Q0S3H0"/>
<dbReference type="GeneID" id="69890522"/>
<dbReference type="KEGG" id="rha:RHA1_ro06139"/>
<dbReference type="eggNOG" id="COG0092">
    <property type="taxonomic scope" value="Bacteria"/>
</dbReference>
<dbReference type="HOGENOM" id="CLU_058591_0_0_11"/>
<dbReference type="OrthoDB" id="9806396at2"/>
<dbReference type="Proteomes" id="UP000008710">
    <property type="component" value="Chromosome"/>
</dbReference>
<dbReference type="GO" id="GO:0022627">
    <property type="term" value="C:cytosolic small ribosomal subunit"/>
    <property type="evidence" value="ECO:0007669"/>
    <property type="project" value="TreeGrafter"/>
</dbReference>
<dbReference type="GO" id="GO:0003729">
    <property type="term" value="F:mRNA binding"/>
    <property type="evidence" value="ECO:0007669"/>
    <property type="project" value="UniProtKB-UniRule"/>
</dbReference>
<dbReference type="GO" id="GO:0019843">
    <property type="term" value="F:rRNA binding"/>
    <property type="evidence" value="ECO:0007669"/>
    <property type="project" value="UniProtKB-UniRule"/>
</dbReference>
<dbReference type="GO" id="GO:0003735">
    <property type="term" value="F:structural constituent of ribosome"/>
    <property type="evidence" value="ECO:0007669"/>
    <property type="project" value="InterPro"/>
</dbReference>
<dbReference type="GO" id="GO:0006412">
    <property type="term" value="P:translation"/>
    <property type="evidence" value="ECO:0007669"/>
    <property type="project" value="UniProtKB-UniRule"/>
</dbReference>
<dbReference type="CDD" id="cd02412">
    <property type="entry name" value="KH-II_30S_S3"/>
    <property type="match status" value="1"/>
</dbReference>
<dbReference type="FunFam" id="3.30.1140.32:FF:000002">
    <property type="entry name" value="30S ribosomal protein S3"/>
    <property type="match status" value="1"/>
</dbReference>
<dbReference type="FunFam" id="3.30.300.20:FF:000001">
    <property type="entry name" value="30S ribosomal protein S3"/>
    <property type="match status" value="1"/>
</dbReference>
<dbReference type="Gene3D" id="3.30.300.20">
    <property type="match status" value="1"/>
</dbReference>
<dbReference type="Gene3D" id="3.30.1140.32">
    <property type="entry name" value="Ribosomal protein S3, C-terminal domain"/>
    <property type="match status" value="1"/>
</dbReference>
<dbReference type="HAMAP" id="MF_01309_B">
    <property type="entry name" value="Ribosomal_uS3_B"/>
    <property type="match status" value="1"/>
</dbReference>
<dbReference type="InterPro" id="IPR004087">
    <property type="entry name" value="KH_dom"/>
</dbReference>
<dbReference type="InterPro" id="IPR015946">
    <property type="entry name" value="KH_dom-like_a/b"/>
</dbReference>
<dbReference type="InterPro" id="IPR004044">
    <property type="entry name" value="KH_dom_type_2"/>
</dbReference>
<dbReference type="InterPro" id="IPR009019">
    <property type="entry name" value="KH_sf_prok-type"/>
</dbReference>
<dbReference type="InterPro" id="IPR036419">
    <property type="entry name" value="Ribosomal_S3_C_sf"/>
</dbReference>
<dbReference type="InterPro" id="IPR005704">
    <property type="entry name" value="Ribosomal_uS3_bac-typ"/>
</dbReference>
<dbReference type="InterPro" id="IPR001351">
    <property type="entry name" value="Ribosomal_uS3_C"/>
</dbReference>
<dbReference type="InterPro" id="IPR018280">
    <property type="entry name" value="Ribosomal_uS3_CS"/>
</dbReference>
<dbReference type="NCBIfam" id="TIGR01009">
    <property type="entry name" value="rpsC_bact"/>
    <property type="match status" value="1"/>
</dbReference>
<dbReference type="PANTHER" id="PTHR11760">
    <property type="entry name" value="30S/40S RIBOSOMAL PROTEIN S3"/>
    <property type="match status" value="1"/>
</dbReference>
<dbReference type="PANTHER" id="PTHR11760:SF19">
    <property type="entry name" value="SMALL RIBOSOMAL SUBUNIT PROTEIN US3C"/>
    <property type="match status" value="1"/>
</dbReference>
<dbReference type="Pfam" id="PF07650">
    <property type="entry name" value="KH_2"/>
    <property type="match status" value="1"/>
</dbReference>
<dbReference type="Pfam" id="PF00189">
    <property type="entry name" value="Ribosomal_S3_C"/>
    <property type="match status" value="1"/>
</dbReference>
<dbReference type="SMART" id="SM00322">
    <property type="entry name" value="KH"/>
    <property type="match status" value="1"/>
</dbReference>
<dbReference type="SUPFAM" id="SSF54814">
    <property type="entry name" value="Prokaryotic type KH domain (KH-domain type II)"/>
    <property type="match status" value="1"/>
</dbReference>
<dbReference type="SUPFAM" id="SSF54821">
    <property type="entry name" value="Ribosomal protein S3 C-terminal domain"/>
    <property type="match status" value="1"/>
</dbReference>
<dbReference type="PROSITE" id="PS50823">
    <property type="entry name" value="KH_TYPE_2"/>
    <property type="match status" value="1"/>
</dbReference>
<dbReference type="PROSITE" id="PS00548">
    <property type="entry name" value="RIBOSOMAL_S3"/>
    <property type="match status" value="1"/>
</dbReference>
<protein>
    <recommendedName>
        <fullName evidence="1">Small ribosomal subunit protein uS3</fullName>
    </recommendedName>
    <alternativeName>
        <fullName evidence="3">30S ribosomal protein S3</fullName>
    </alternativeName>
</protein>
<accession>Q0S3H0</accession>
<name>RS3_RHOJR</name>
<proteinExistence type="inferred from homology"/>
<comment type="function">
    <text evidence="1">Binds the lower part of the 30S subunit head. Binds mRNA in the 70S ribosome, positioning it for translation.</text>
</comment>
<comment type="subunit">
    <text evidence="1">Part of the 30S ribosomal subunit. Forms a tight complex with proteins S10 and S14.</text>
</comment>
<comment type="similarity">
    <text evidence="1">Belongs to the universal ribosomal protein uS3 family.</text>
</comment>
<reference key="1">
    <citation type="journal article" date="2006" name="Proc. Natl. Acad. Sci. U.S.A.">
        <title>The complete genome of Rhodococcus sp. RHA1 provides insights into a catabolic powerhouse.</title>
        <authorList>
            <person name="McLeod M.P."/>
            <person name="Warren R.L."/>
            <person name="Hsiao W.W.L."/>
            <person name="Araki N."/>
            <person name="Myhre M."/>
            <person name="Fernandes C."/>
            <person name="Miyazawa D."/>
            <person name="Wong W."/>
            <person name="Lillquist A.L."/>
            <person name="Wang D."/>
            <person name="Dosanjh M."/>
            <person name="Hara H."/>
            <person name="Petrescu A."/>
            <person name="Morin R.D."/>
            <person name="Yang G."/>
            <person name="Stott J.M."/>
            <person name="Schein J.E."/>
            <person name="Shin H."/>
            <person name="Smailus D."/>
            <person name="Siddiqui A.S."/>
            <person name="Marra M.A."/>
            <person name="Jones S.J.M."/>
            <person name="Holt R."/>
            <person name="Brinkman F.S.L."/>
            <person name="Miyauchi K."/>
            <person name="Fukuda M."/>
            <person name="Davies J.E."/>
            <person name="Mohn W.W."/>
            <person name="Eltis L.D."/>
        </authorList>
    </citation>
    <scope>NUCLEOTIDE SEQUENCE [LARGE SCALE GENOMIC DNA]</scope>
    <source>
        <strain>RHA1</strain>
    </source>
</reference>